<dbReference type="EMBL" id="BA000033">
    <property type="protein sequence ID" value="BAB95217.1"/>
    <property type="molecule type" value="Genomic_DNA"/>
</dbReference>
<dbReference type="RefSeq" id="WP_000005212.1">
    <property type="nucleotide sequence ID" value="NC_003923.1"/>
</dbReference>
<dbReference type="SMR" id="P67761"/>
<dbReference type="KEGG" id="sam:MW1352"/>
<dbReference type="HOGENOM" id="CLU_122408_0_0_9"/>
<dbReference type="Gene3D" id="3.40.1530.30">
    <property type="entry name" value="Uncharacterised family UPF0302, N-terminal domain"/>
    <property type="match status" value="1"/>
</dbReference>
<dbReference type="HAMAP" id="MF_00760">
    <property type="entry name" value="UPF0302"/>
    <property type="match status" value="1"/>
</dbReference>
<dbReference type="InterPro" id="IPR014957">
    <property type="entry name" value="IDEAL_dom"/>
</dbReference>
<dbReference type="InterPro" id="IPR011188">
    <property type="entry name" value="UPF0302"/>
</dbReference>
<dbReference type="InterPro" id="IPR014963">
    <property type="entry name" value="UPF0302_N"/>
</dbReference>
<dbReference type="InterPro" id="IPR038091">
    <property type="entry name" value="UPF0302_N_sf"/>
</dbReference>
<dbReference type="Pfam" id="PF08858">
    <property type="entry name" value="IDEAL"/>
    <property type="match status" value="1"/>
</dbReference>
<dbReference type="Pfam" id="PF08864">
    <property type="entry name" value="UPF0302"/>
    <property type="match status" value="1"/>
</dbReference>
<dbReference type="PIRSF" id="PIRSF007165">
    <property type="entry name" value="UCP007165"/>
    <property type="match status" value="1"/>
</dbReference>
<dbReference type="SMART" id="SM00914">
    <property type="entry name" value="IDEAL"/>
    <property type="match status" value="1"/>
</dbReference>
<organism>
    <name type="scientific">Staphylococcus aureus (strain MW2)</name>
    <dbReference type="NCBI Taxonomy" id="196620"/>
    <lineage>
        <taxon>Bacteria</taxon>
        <taxon>Bacillati</taxon>
        <taxon>Bacillota</taxon>
        <taxon>Bacilli</taxon>
        <taxon>Bacillales</taxon>
        <taxon>Staphylococcaceae</taxon>
        <taxon>Staphylococcus</taxon>
    </lineage>
</organism>
<evidence type="ECO:0000255" key="1">
    <source>
        <dbReference type="HAMAP-Rule" id="MF_00760"/>
    </source>
</evidence>
<protein>
    <recommendedName>
        <fullName evidence="1">UPF0302 protein MW1352</fullName>
    </recommendedName>
</protein>
<feature type="chain" id="PRO_0000216109" description="UPF0302 protein MW1352">
    <location>
        <begin position="1"/>
        <end position="191"/>
    </location>
</feature>
<sequence>MSETLNQIKESFIEYLLFQYRFKSRIAVWVLNYIKVNEAKLANIHFVDTKINHHETLEIAEVGSHASAIQFTKRNIKLMNTNEIFDYIANHNCAFDIQIHFANVSKREQRLDDLIVAQLTESPSYQTYLHDLNSMAIDRHKHALLIDYLLHNIDLSLQMNEKQRFYQLTQILNTLKLVNKHNQFEDLADDD</sequence>
<proteinExistence type="inferred from homology"/>
<accession>P67761</accession>
<accession>Q99U27</accession>
<name>Y1352_STAAW</name>
<comment type="similarity">
    <text evidence="1">Belongs to the UPF0302 family.</text>
</comment>
<reference key="1">
    <citation type="journal article" date="2002" name="Lancet">
        <title>Genome and virulence determinants of high virulence community-acquired MRSA.</title>
        <authorList>
            <person name="Baba T."/>
            <person name="Takeuchi F."/>
            <person name="Kuroda M."/>
            <person name="Yuzawa H."/>
            <person name="Aoki K."/>
            <person name="Oguchi A."/>
            <person name="Nagai Y."/>
            <person name="Iwama N."/>
            <person name="Asano K."/>
            <person name="Naimi T."/>
            <person name="Kuroda H."/>
            <person name="Cui L."/>
            <person name="Yamamoto K."/>
            <person name="Hiramatsu K."/>
        </authorList>
    </citation>
    <scope>NUCLEOTIDE SEQUENCE [LARGE SCALE GENOMIC DNA]</scope>
    <source>
        <strain>MW2</strain>
    </source>
</reference>
<gene>
    <name type="ordered locus">MW1352</name>
</gene>